<proteinExistence type="evidence at protein level"/>
<comment type="function">
    <text>Essential for proper morphogenesis of the vacuole. May exist as structural reinforcement on the surface of the vacuolar membrane and be required for maintenance against rupture by osmotic pressure.</text>
</comment>
<comment type="subunit">
    <text>Possibly multimeric. Associates with VAM3.</text>
</comment>
<comment type="interaction">
    <interactant intactId="EBI-20232">
        <id>P32912</id>
    </interactant>
    <interactant intactId="EBI-35465">
        <id>Q12255</id>
        <label>NYV1</label>
    </interactant>
    <organismsDiffer>false</organismsDiffer>
    <experiments>11</experiments>
</comment>
<comment type="interaction">
    <interactant intactId="EBI-20232">
        <id>P32912</id>
    </interactant>
    <interactant intactId="EBI-31471">
        <id>Q12270</id>
        <label>RBD2</label>
    </interactant>
    <organismsDiffer>false</organismsDiffer>
    <experiments>3</experiments>
</comment>
<comment type="interaction">
    <interactant intactId="EBI-20232">
        <id>P32912</id>
    </interactant>
    <interactant intactId="EBI-20227">
        <id>Q12241</id>
        <label>VAM3</label>
    </interactant>
    <organismsDiffer>false</organismsDiffer>
    <experiments>12</experiments>
</comment>
<comment type="interaction">
    <interactant intactId="EBI-20232">
        <id>P32912</id>
    </interactant>
    <interactant intactId="EBI-20395">
        <id>P20795</id>
        <label>VPS33</label>
    </interactant>
    <organismsDiffer>false</organismsDiffer>
    <experiments>4</experiments>
</comment>
<comment type="interaction">
    <interactant intactId="EBI-20232">
        <id>P32912</id>
    </interactant>
    <interactant intactId="EBI-28230">
        <id>P53845</id>
        <label>YIF1</label>
    </interactant>
    <organismsDiffer>false</organismsDiffer>
    <experiments>3</experiments>
</comment>
<comment type="subcellular location">
    <subcellularLocation>
        <location>Vacuole</location>
    </subcellularLocation>
</comment>
<comment type="miscellaneous">
    <text evidence="4">Present with 2360 molecules/cell in log phase SD medium.</text>
</comment>
<keyword id="KW-0002">3D-structure</keyword>
<keyword id="KW-0175">Coiled coil</keyword>
<keyword id="KW-1185">Reference proteome</keyword>
<keyword id="KW-0926">Vacuole</keyword>
<gene>
    <name type="primary">VAM7</name>
    <name type="ordered locus">YGL212W</name>
</gene>
<reference key="1">
    <citation type="journal article" date="1992" name="J. Biol. Chem.">
        <title>Genes for directing vacuolar morphogenesis in Saccharomyces cerevisiae. II. VAM7, a gene for regulating morphogenic assembly of the vacuoles.</title>
        <authorList>
            <person name="Wada Y."/>
            <person name="Anraku Y."/>
        </authorList>
    </citation>
    <scope>NUCLEOTIDE SEQUENCE [GENOMIC DNA]</scope>
    <source>
        <strain>YWH019-7A</strain>
    </source>
</reference>
<reference key="2">
    <citation type="journal article" date="1997" name="Yeast">
        <title>Analysis of 21.7 kb DNA sequence from the left arm of chromosome VII reveals 11 open reading frames: two correspond to new genes.</title>
        <authorList>
            <person name="Feuermann M."/>
            <person name="Simeonava L."/>
            <person name="Souciet J.-L."/>
            <person name="Potier S."/>
        </authorList>
    </citation>
    <scope>NUCLEOTIDE SEQUENCE [GENOMIC DNA]</scope>
</reference>
<reference key="3">
    <citation type="journal article" date="1996" name="Yeast">
        <title>Lambda clone B22 contains a 7676 bp genomic fragment of Saccharomyces cerevisiae chromosome VII spanning the VAM7-SPM2 intergenic region and containing three novel transcribed open reading frames.</title>
        <authorList>
            <person name="Kail M."/>
            <person name="Juettner E."/>
            <person name="Vaux D."/>
        </authorList>
    </citation>
    <scope>NUCLEOTIDE SEQUENCE [GENOMIC DNA]</scope>
    <source>
        <strain>ATCC 204508 / S288c</strain>
    </source>
</reference>
<reference key="4">
    <citation type="journal article" date="1997" name="Nature">
        <title>The nucleotide sequence of Saccharomyces cerevisiae chromosome VII.</title>
        <authorList>
            <person name="Tettelin H."/>
            <person name="Agostoni-Carbone M.L."/>
            <person name="Albermann K."/>
            <person name="Albers M."/>
            <person name="Arroyo J."/>
            <person name="Backes U."/>
            <person name="Barreiros T."/>
            <person name="Bertani I."/>
            <person name="Bjourson A.J."/>
            <person name="Brueckner M."/>
            <person name="Bruschi C.V."/>
            <person name="Carignani G."/>
            <person name="Castagnoli L."/>
            <person name="Cerdan E."/>
            <person name="Clemente M.L."/>
            <person name="Coblenz A."/>
            <person name="Coglievina M."/>
            <person name="Coissac E."/>
            <person name="Defoor E."/>
            <person name="Del Bino S."/>
            <person name="Delius H."/>
            <person name="Delneri D."/>
            <person name="de Wergifosse P."/>
            <person name="Dujon B."/>
            <person name="Durand P."/>
            <person name="Entian K.-D."/>
            <person name="Eraso P."/>
            <person name="Escribano V."/>
            <person name="Fabiani L."/>
            <person name="Fartmann B."/>
            <person name="Feroli F."/>
            <person name="Feuermann M."/>
            <person name="Frontali L."/>
            <person name="Garcia-Gonzalez M."/>
            <person name="Garcia-Saez M.I."/>
            <person name="Goffeau A."/>
            <person name="Guerreiro P."/>
            <person name="Hani J."/>
            <person name="Hansen M."/>
            <person name="Hebling U."/>
            <person name="Hernandez K."/>
            <person name="Heumann K."/>
            <person name="Hilger F."/>
            <person name="Hofmann B."/>
            <person name="Indge K.J."/>
            <person name="James C.M."/>
            <person name="Klima R."/>
            <person name="Koetter P."/>
            <person name="Kramer B."/>
            <person name="Kramer W."/>
            <person name="Lauquin G."/>
            <person name="Leuther H."/>
            <person name="Louis E.J."/>
            <person name="Maillier E."/>
            <person name="Marconi A."/>
            <person name="Martegani E."/>
            <person name="Mazon M.J."/>
            <person name="Mazzoni C."/>
            <person name="McReynolds A.D.K."/>
            <person name="Melchioretto P."/>
            <person name="Mewes H.-W."/>
            <person name="Minenkova O."/>
            <person name="Mueller-Auer S."/>
            <person name="Nawrocki A."/>
            <person name="Netter P."/>
            <person name="Neu R."/>
            <person name="Nombela C."/>
            <person name="Oliver S.G."/>
            <person name="Panzeri L."/>
            <person name="Paoluzi S."/>
            <person name="Plevani P."/>
            <person name="Portetelle D."/>
            <person name="Portillo F."/>
            <person name="Potier S."/>
            <person name="Purnelle B."/>
            <person name="Rieger M."/>
            <person name="Riles L."/>
            <person name="Rinaldi T."/>
            <person name="Robben J."/>
            <person name="Rodrigues-Pousada C."/>
            <person name="Rodriguez-Belmonte E."/>
            <person name="Rodriguez-Torres A.M."/>
            <person name="Rose M."/>
            <person name="Ruzzi M."/>
            <person name="Saliola M."/>
            <person name="Sanchez-Perez M."/>
            <person name="Schaefer B."/>
            <person name="Schaefer M."/>
            <person name="Scharfe M."/>
            <person name="Schmidheini T."/>
            <person name="Schreer A."/>
            <person name="Skala J."/>
            <person name="Souciet J.-L."/>
            <person name="Steensma H.Y."/>
            <person name="Talla E."/>
            <person name="Thierry A."/>
            <person name="Vandenbol M."/>
            <person name="van der Aart Q.J.M."/>
            <person name="Van Dyck L."/>
            <person name="Vanoni M."/>
            <person name="Verhasselt P."/>
            <person name="Voet M."/>
            <person name="Volckaert G."/>
            <person name="Wambutt R."/>
            <person name="Watson M.D."/>
            <person name="Weber N."/>
            <person name="Wedler E."/>
            <person name="Wedler H."/>
            <person name="Wipfli P."/>
            <person name="Wolf K."/>
            <person name="Wright L.F."/>
            <person name="Zaccaria P."/>
            <person name="Zimmermann M."/>
            <person name="Zollner A."/>
            <person name="Kleine K."/>
        </authorList>
    </citation>
    <scope>NUCLEOTIDE SEQUENCE [LARGE SCALE GENOMIC DNA]</scope>
    <source>
        <strain>ATCC 204508 / S288c</strain>
    </source>
</reference>
<reference key="5">
    <citation type="journal article" date="2014" name="G3 (Bethesda)">
        <title>The reference genome sequence of Saccharomyces cerevisiae: Then and now.</title>
        <authorList>
            <person name="Engel S.R."/>
            <person name="Dietrich F.S."/>
            <person name="Fisk D.G."/>
            <person name="Binkley G."/>
            <person name="Balakrishnan R."/>
            <person name="Costanzo M.C."/>
            <person name="Dwight S.S."/>
            <person name="Hitz B.C."/>
            <person name="Karra K."/>
            <person name="Nash R.S."/>
            <person name="Weng S."/>
            <person name="Wong E.D."/>
            <person name="Lloyd P."/>
            <person name="Skrzypek M.S."/>
            <person name="Miyasato S.R."/>
            <person name="Simison M."/>
            <person name="Cherry J.M."/>
        </authorList>
    </citation>
    <scope>GENOME REANNOTATION</scope>
    <source>
        <strain>ATCC 204508 / S288c</strain>
    </source>
</reference>
<reference key="6">
    <citation type="journal article" date="1998" name="Mol. Cell. Biol.">
        <title>Vam7p, a SNAP-25-like molecule, and Vam3p, a syntaxin homolog, function together in yeast vacuolar protein trafficking.</title>
        <authorList>
            <person name="Sato T.K."/>
            <person name="Darsow T."/>
            <person name="Emr S.D."/>
        </authorList>
    </citation>
    <scope>CHARACTERIZATION</scope>
</reference>
<reference key="7">
    <citation type="journal article" date="2003" name="Nature">
        <title>Global analysis of protein expression in yeast.</title>
        <authorList>
            <person name="Ghaemmaghami S."/>
            <person name="Huh W.-K."/>
            <person name="Bower K."/>
            <person name="Howson R.W."/>
            <person name="Belle A."/>
            <person name="Dephoure N."/>
            <person name="O'Shea E.K."/>
            <person name="Weissman J.S."/>
        </authorList>
    </citation>
    <scope>LEVEL OF PROTEIN EXPRESSION [LARGE SCALE ANALYSIS]</scope>
</reference>
<reference key="8">
    <citation type="journal article" date="2009" name="Science">
        <title>Global analysis of Cdk1 substrate phosphorylation sites provides insights into evolution.</title>
        <authorList>
            <person name="Holt L.J."/>
            <person name="Tuch B.B."/>
            <person name="Villen J."/>
            <person name="Johnson A.D."/>
            <person name="Gygi S.P."/>
            <person name="Morgan D.O."/>
        </authorList>
    </citation>
    <scope>IDENTIFICATION BY MASS SPECTROMETRY [LARGE SCALE ANALYSIS]</scope>
</reference>
<reference key="9">
    <citation type="journal article" date="2012" name="Proc. Natl. Acad. Sci. U.S.A.">
        <title>N-terminal acetylome analyses and functional insights of the N-terminal acetyltransferase NatB.</title>
        <authorList>
            <person name="Van Damme P."/>
            <person name="Lasa M."/>
            <person name="Polevoda B."/>
            <person name="Gazquez C."/>
            <person name="Elosegui-Artola A."/>
            <person name="Kim D.S."/>
            <person name="De Juan-Pardo E."/>
            <person name="Demeyer K."/>
            <person name="Hole K."/>
            <person name="Larrea E."/>
            <person name="Timmerman E."/>
            <person name="Prieto J."/>
            <person name="Arnesen T."/>
            <person name="Sherman F."/>
            <person name="Gevaert K."/>
            <person name="Aldabe R."/>
        </authorList>
    </citation>
    <scope>IDENTIFICATION BY MASS SPECTROMETRY [LARGE SCALE ANALYSIS]</scope>
</reference>
<feature type="chain" id="PRO_0000065760" description="Vacuolar morphogenesis protein 7">
    <location>
        <begin position="1"/>
        <end position="316"/>
    </location>
</feature>
<feature type="domain" description="PX" evidence="2">
    <location>
        <begin position="1"/>
        <end position="124"/>
    </location>
</feature>
<feature type="domain" description="t-SNARE coiled-coil homology" evidence="3">
    <location>
        <begin position="250"/>
        <end position="312"/>
    </location>
</feature>
<feature type="coiled-coil region" evidence="1">
    <location>
        <begin position="168"/>
        <end position="186"/>
    </location>
</feature>
<feature type="strand" evidence="5">
    <location>
        <begin position="16"/>
        <end position="22"/>
    </location>
</feature>
<feature type="strand" evidence="5">
    <location>
        <begin position="27"/>
        <end position="32"/>
    </location>
</feature>
<feature type="strand" evidence="5">
    <location>
        <begin position="38"/>
        <end position="40"/>
    </location>
</feature>
<feature type="helix" evidence="5">
    <location>
        <begin position="42"/>
        <end position="56"/>
    </location>
</feature>
<feature type="helix" evidence="5">
    <location>
        <begin position="82"/>
        <end position="89"/>
    </location>
</feature>
<feature type="helix" evidence="5">
    <location>
        <begin position="92"/>
        <end position="100"/>
    </location>
</feature>
<feature type="helix" evidence="5">
    <location>
        <begin position="107"/>
        <end position="110"/>
    </location>
</feature>
<feature type="helix" evidence="5">
    <location>
        <begin position="112"/>
        <end position="117"/>
    </location>
</feature>
<evidence type="ECO:0000255" key="1"/>
<evidence type="ECO:0000255" key="2">
    <source>
        <dbReference type="PROSITE-ProRule" id="PRU00147"/>
    </source>
</evidence>
<evidence type="ECO:0000255" key="3">
    <source>
        <dbReference type="PROSITE-ProRule" id="PRU00202"/>
    </source>
</evidence>
<evidence type="ECO:0000269" key="4">
    <source>
    </source>
</evidence>
<evidence type="ECO:0007829" key="5">
    <source>
        <dbReference type="PDB" id="1KMD"/>
    </source>
</evidence>
<name>VAM7_YEAST</name>
<sequence>MAANSVGKMSEKLRIKVDDVKINPKYVLYGVSTPNKRLYKRYSEFWKLKTRLERDVGSTIPYDFPEKPGVLDRRWQRRYDDPEMIDERRIGLERFLNELYNDRFDSRWRDTKIAQDFLQLSKPNVSQEKSQQHLETADEVGWDEMIRDIKLDLDKESDGTPSVRGALRARTKLHKLRERLEQDVQKKSLPSTEVTRRAALLRSLLKECDDIGTANIAQDRGRLLGVATSDNSSTTEVQGRTNNDLQQGQMQMVRDQEQELVALHRIIQAQRGLALEMNEELQTQNELLTALEDDVDNTGRRLQIANKKARHFNNSA</sequence>
<protein>
    <recommendedName>
        <fullName>Vacuolar morphogenesis protein 7</fullName>
    </recommendedName>
</protein>
<accession>P32912</accession>
<accession>D6VTU3</accession>
<organism>
    <name type="scientific">Saccharomyces cerevisiae (strain ATCC 204508 / S288c)</name>
    <name type="common">Baker's yeast</name>
    <dbReference type="NCBI Taxonomy" id="559292"/>
    <lineage>
        <taxon>Eukaryota</taxon>
        <taxon>Fungi</taxon>
        <taxon>Dikarya</taxon>
        <taxon>Ascomycota</taxon>
        <taxon>Saccharomycotina</taxon>
        <taxon>Saccharomycetes</taxon>
        <taxon>Saccharomycetales</taxon>
        <taxon>Saccharomycetaceae</taxon>
        <taxon>Saccharomyces</taxon>
    </lineage>
</organism>
<dbReference type="EMBL" id="D11379">
    <property type="protein sequence ID" value="BAA01977.1"/>
    <property type="molecule type" value="Genomic_DNA"/>
</dbReference>
<dbReference type="EMBL" id="U33754">
    <property type="protein sequence ID" value="AAC49494.1"/>
    <property type="molecule type" value="Genomic_DNA"/>
</dbReference>
<dbReference type="EMBL" id="Z72734">
    <property type="protein sequence ID" value="CAA96928.1"/>
    <property type="molecule type" value="Genomic_DNA"/>
</dbReference>
<dbReference type="EMBL" id="BK006941">
    <property type="protein sequence ID" value="DAA07904.1"/>
    <property type="molecule type" value="Genomic_DNA"/>
</dbReference>
<dbReference type="PIR" id="S31263">
    <property type="entry name" value="S31263"/>
</dbReference>
<dbReference type="RefSeq" id="NP_011303.1">
    <property type="nucleotide sequence ID" value="NM_001181077.1"/>
</dbReference>
<dbReference type="PDB" id="1KMD">
    <property type="method" value="NMR"/>
    <property type="chains" value="A=8-124"/>
</dbReference>
<dbReference type="PDBsum" id="1KMD"/>
<dbReference type="SMR" id="P32912"/>
<dbReference type="BioGRID" id="33044">
    <property type="interactions" value="716"/>
</dbReference>
<dbReference type="ComplexPortal" id="CPX-1887">
    <property type="entry name" value="Vacuolar SNARE complex VAM3-VTI1-VAM7-YKT6"/>
</dbReference>
<dbReference type="ComplexPortal" id="CPX-5401">
    <property type="entry name" value="Vacuolar SNARE complex VAM3-VTI1-VAM7-NYV1"/>
</dbReference>
<dbReference type="DIP" id="DIP-1722N"/>
<dbReference type="FunCoup" id="P32912">
    <property type="interactions" value="234"/>
</dbReference>
<dbReference type="IntAct" id="P32912">
    <property type="interactions" value="37"/>
</dbReference>
<dbReference type="MINT" id="P32912"/>
<dbReference type="STRING" id="4932.YGL212W"/>
<dbReference type="TCDB" id="1.F.1.1.2">
    <property type="family name" value="the synaptosomal vesicle fusion pore (svf-pore) family"/>
</dbReference>
<dbReference type="iPTMnet" id="P32912"/>
<dbReference type="PaxDb" id="4932-YGL212W"/>
<dbReference type="PeptideAtlas" id="P32912"/>
<dbReference type="EnsemblFungi" id="YGL212W_mRNA">
    <property type="protein sequence ID" value="YGL212W"/>
    <property type="gene ID" value="YGL212W"/>
</dbReference>
<dbReference type="GeneID" id="852660"/>
<dbReference type="KEGG" id="sce:YGL212W"/>
<dbReference type="AGR" id="SGD:S000003180"/>
<dbReference type="SGD" id="S000003180">
    <property type="gene designation" value="VAM7"/>
</dbReference>
<dbReference type="VEuPathDB" id="FungiDB:YGL212W"/>
<dbReference type="eggNOG" id="KOG3202">
    <property type="taxonomic scope" value="Eukaryota"/>
</dbReference>
<dbReference type="HOGENOM" id="CLU_033748_1_0_1"/>
<dbReference type="InParanoid" id="P32912"/>
<dbReference type="OMA" id="DSFDTRW"/>
<dbReference type="OrthoDB" id="428895at2759"/>
<dbReference type="BioCyc" id="YEAST:G3O-30689-MONOMER"/>
<dbReference type="Reactome" id="R-SCE-6811440">
    <property type="pathway name" value="Retrograde transport at the Trans-Golgi-Network"/>
</dbReference>
<dbReference type="BioGRID-ORCS" id="852660">
    <property type="hits" value="7 hits in 10 CRISPR screens"/>
</dbReference>
<dbReference type="EvolutionaryTrace" id="P32912"/>
<dbReference type="PRO" id="PR:P32912"/>
<dbReference type="Proteomes" id="UP000002311">
    <property type="component" value="Chromosome VII"/>
</dbReference>
<dbReference type="RNAct" id="P32912">
    <property type="molecule type" value="protein"/>
</dbReference>
<dbReference type="GO" id="GO:0000421">
    <property type="term" value="C:autophagosome membrane"/>
    <property type="evidence" value="ECO:0000269"/>
    <property type="project" value="ComplexPortal"/>
</dbReference>
<dbReference type="GO" id="GO:0012505">
    <property type="term" value="C:endomembrane system"/>
    <property type="evidence" value="ECO:0000318"/>
    <property type="project" value="GO_Central"/>
</dbReference>
<dbReference type="GO" id="GO:0000329">
    <property type="term" value="C:fungal-type vacuole membrane"/>
    <property type="evidence" value="ECO:0000314"/>
    <property type="project" value="SGD"/>
</dbReference>
<dbReference type="GO" id="GO:0000407">
    <property type="term" value="C:phagophore assembly site"/>
    <property type="evidence" value="ECO:0000314"/>
    <property type="project" value="SGD"/>
</dbReference>
<dbReference type="GO" id="GO:0031201">
    <property type="term" value="C:SNARE complex"/>
    <property type="evidence" value="ECO:0000315"/>
    <property type="project" value="SGD"/>
</dbReference>
<dbReference type="GO" id="GO:0005774">
    <property type="term" value="C:vacuolar membrane"/>
    <property type="evidence" value="ECO:0000314"/>
    <property type="project" value="ComplexPortal"/>
</dbReference>
<dbReference type="GO" id="GO:0070300">
    <property type="term" value="F:phosphatidic acid binding"/>
    <property type="evidence" value="ECO:0000314"/>
    <property type="project" value="SGD"/>
</dbReference>
<dbReference type="GO" id="GO:0032266">
    <property type="term" value="F:phosphatidylinositol-3-phosphate binding"/>
    <property type="evidence" value="ECO:0000314"/>
    <property type="project" value="SGD"/>
</dbReference>
<dbReference type="GO" id="GO:0005484">
    <property type="term" value="F:SNAP receptor activity"/>
    <property type="evidence" value="ECO:0000314"/>
    <property type="project" value="SGD"/>
</dbReference>
<dbReference type="GO" id="GO:0000149">
    <property type="term" value="F:SNARE binding"/>
    <property type="evidence" value="ECO:0000318"/>
    <property type="project" value="GO_Central"/>
</dbReference>
<dbReference type="GO" id="GO:0061911">
    <property type="term" value="P:amphisome-lysosome fusion"/>
    <property type="evidence" value="ECO:0000303"/>
    <property type="project" value="ComplexPortal"/>
</dbReference>
<dbReference type="GO" id="GO:0061909">
    <property type="term" value="P:autophagosome-lysosome fusion"/>
    <property type="evidence" value="ECO:0000315"/>
    <property type="project" value="SGD"/>
</dbReference>
<dbReference type="GO" id="GO:0032258">
    <property type="term" value="P:cytoplasm to vacuole targeting by the Cvt pathway"/>
    <property type="evidence" value="ECO:0000315"/>
    <property type="project" value="SGD"/>
</dbReference>
<dbReference type="GO" id="GO:0006886">
    <property type="term" value="P:intracellular protein transport"/>
    <property type="evidence" value="ECO:0000318"/>
    <property type="project" value="GO_Central"/>
</dbReference>
<dbReference type="GO" id="GO:0016236">
    <property type="term" value="P:macroautophagy"/>
    <property type="evidence" value="ECO:0000315"/>
    <property type="project" value="SGD"/>
</dbReference>
<dbReference type="GO" id="GO:0034727">
    <property type="term" value="P:piecemeal microautophagy of the nucleus"/>
    <property type="evidence" value="ECO:0000315"/>
    <property type="project" value="SGD"/>
</dbReference>
<dbReference type="GO" id="GO:0007036">
    <property type="term" value="P:vacuolar calcium ion homeostasis"/>
    <property type="evidence" value="ECO:0000314"/>
    <property type="project" value="ComplexPortal"/>
</dbReference>
<dbReference type="GO" id="GO:0042144">
    <property type="term" value="P:vacuole fusion, non-autophagic"/>
    <property type="evidence" value="ECO:0000314"/>
    <property type="project" value="SGD"/>
</dbReference>
<dbReference type="GO" id="GO:0048278">
    <property type="term" value="P:vesicle docking"/>
    <property type="evidence" value="ECO:0000318"/>
    <property type="project" value="GO_Central"/>
</dbReference>
<dbReference type="GO" id="GO:0006906">
    <property type="term" value="P:vesicle fusion"/>
    <property type="evidence" value="ECO:0000314"/>
    <property type="project" value="SGD"/>
</dbReference>
<dbReference type="CDD" id="cd06897">
    <property type="entry name" value="PX_SNARE"/>
    <property type="match status" value="1"/>
</dbReference>
<dbReference type="CDD" id="cd15858">
    <property type="entry name" value="SNARE_VAM7"/>
    <property type="match status" value="1"/>
</dbReference>
<dbReference type="FunFam" id="1.20.5.110:FF:000058">
    <property type="entry name" value="VAM7p Vacuolar SNARE protein"/>
    <property type="match status" value="1"/>
</dbReference>
<dbReference type="Gene3D" id="1.20.5.110">
    <property type="match status" value="1"/>
</dbReference>
<dbReference type="Gene3D" id="3.30.1520.10">
    <property type="entry name" value="Phox-like domain"/>
    <property type="match status" value="1"/>
</dbReference>
<dbReference type="InterPro" id="IPR001683">
    <property type="entry name" value="PX_dom"/>
</dbReference>
<dbReference type="InterPro" id="IPR036871">
    <property type="entry name" value="PX_dom_sf"/>
</dbReference>
<dbReference type="InterPro" id="IPR000727">
    <property type="entry name" value="T_SNARE_dom"/>
</dbReference>
<dbReference type="PANTHER" id="PTHR12431:SF14">
    <property type="entry name" value="LD15323P"/>
    <property type="match status" value="1"/>
</dbReference>
<dbReference type="PANTHER" id="PTHR12431">
    <property type="entry name" value="SORTING NEXIN 17 AND 27"/>
    <property type="match status" value="1"/>
</dbReference>
<dbReference type="Pfam" id="PF00787">
    <property type="entry name" value="PX"/>
    <property type="match status" value="1"/>
</dbReference>
<dbReference type="SMART" id="SM00312">
    <property type="entry name" value="PX"/>
    <property type="match status" value="1"/>
</dbReference>
<dbReference type="SMART" id="SM00397">
    <property type="entry name" value="t_SNARE"/>
    <property type="match status" value="1"/>
</dbReference>
<dbReference type="SUPFAM" id="SSF64268">
    <property type="entry name" value="PX domain"/>
    <property type="match status" value="1"/>
</dbReference>
<dbReference type="SUPFAM" id="SSF58038">
    <property type="entry name" value="SNARE fusion complex"/>
    <property type="match status" value="1"/>
</dbReference>
<dbReference type="PROSITE" id="PS50195">
    <property type="entry name" value="PX"/>
    <property type="match status" value="1"/>
</dbReference>
<dbReference type="PROSITE" id="PS50192">
    <property type="entry name" value="T_SNARE"/>
    <property type="match status" value="1"/>
</dbReference>